<keyword id="KW-1003">Cell membrane</keyword>
<keyword id="KW-0472">Membrane</keyword>
<keyword id="KW-0653">Protein transport</keyword>
<keyword id="KW-1185">Reference proteome</keyword>
<keyword id="KW-0811">Translocation</keyword>
<keyword id="KW-0812">Transmembrane</keyword>
<keyword id="KW-1133">Transmembrane helix</keyword>
<keyword id="KW-0813">Transport</keyword>
<protein>
    <recommendedName>
        <fullName evidence="1">Sec-independent protein translocase protein TatA</fullName>
    </recommendedName>
</protein>
<gene>
    <name evidence="1" type="primary">tatA</name>
    <name type="ordered locus">Amet_0994</name>
</gene>
<organism>
    <name type="scientific">Alkaliphilus metalliredigens (strain QYMF)</name>
    <dbReference type="NCBI Taxonomy" id="293826"/>
    <lineage>
        <taxon>Bacteria</taxon>
        <taxon>Bacillati</taxon>
        <taxon>Bacillota</taxon>
        <taxon>Clostridia</taxon>
        <taxon>Peptostreptococcales</taxon>
        <taxon>Natronincolaceae</taxon>
        <taxon>Alkaliphilus</taxon>
    </lineage>
</organism>
<sequence length="69" mass="7802">MFGKLGMPELVLIFAVALVIFGPSKLPEIGKSLGKSIKEFKKFSKEMKDDLSLEERETKDKDTVKVKEE</sequence>
<reference key="1">
    <citation type="journal article" date="2016" name="Genome Announc.">
        <title>Complete genome sequence of Alkaliphilus metalliredigens strain QYMF, an alkaliphilic and metal-reducing bacterium isolated from borax-contaminated leachate ponds.</title>
        <authorList>
            <person name="Hwang C."/>
            <person name="Copeland A."/>
            <person name="Lucas S."/>
            <person name="Lapidus A."/>
            <person name="Barry K."/>
            <person name="Detter J.C."/>
            <person name="Glavina Del Rio T."/>
            <person name="Hammon N."/>
            <person name="Israni S."/>
            <person name="Dalin E."/>
            <person name="Tice H."/>
            <person name="Pitluck S."/>
            <person name="Chertkov O."/>
            <person name="Brettin T."/>
            <person name="Bruce D."/>
            <person name="Han C."/>
            <person name="Schmutz J."/>
            <person name="Larimer F."/>
            <person name="Land M.L."/>
            <person name="Hauser L."/>
            <person name="Kyrpides N."/>
            <person name="Mikhailova N."/>
            <person name="Ye Q."/>
            <person name="Zhou J."/>
            <person name="Richardson P."/>
            <person name="Fields M.W."/>
        </authorList>
    </citation>
    <scope>NUCLEOTIDE SEQUENCE [LARGE SCALE GENOMIC DNA]</scope>
    <source>
        <strain>QYMF</strain>
    </source>
</reference>
<dbReference type="EMBL" id="CP000724">
    <property type="protein sequence ID" value="ABR47211.1"/>
    <property type="molecule type" value="Genomic_DNA"/>
</dbReference>
<dbReference type="RefSeq" id="WP_012062253.1">
    <property type="nucleotide sequence ID" value="NC_009633.1"/>
</dbReference>
<dbReference type="SMR" id="A6TLZ3"/>
<dbReference type="STRING" id="293826.Amet_0994"/>
<dbReference type="KEGG" id="amt:Amet_0994"/>
<dbReference type="eggNOG" id="COG1826">
    <property type="taxonomic scope" value="Bacteria"/>
</dbReference>
<dbReference type="HOGENOM" id="CLU_086034_6_0_9"/>
<dbReference type="OrthoDB" id="9800908at2"/>
<dbReference type="Proteomes" id="UP000001572">
    <property type="component" value="Chromosome"/>
</dbReference>
<dbReference type="GO" id="GO:0033281">
    <property type="term" value="C:TAT protein transport complex"/>
    <property type="evidence" value="ECO:0007669"/>
    <property type="project" value="UniProtKB-UniRule"/>
</dbReference>
<dbReference type="GO" id="GO:0008320">
    <property type="term" value="F:protein transmembrane transporter activity"/>
    <property type="evidence" value="ECO:0007669"/>
    <property type="project" value="UniProtKB-UniRule"/>
</dbReference>
<dbReference type="GO" id="GO:0043953">
    <property type="term" value="P:protein transport by the Tat complex"/>
    <property type="evidence" value="ECO:0007669"/>
    <property type="project" value="UniProtKB-UniRule"/>
</dbReference>
<dbReference type="Gene3D" id="1.20.5.3310">
    <property type="match status" value="1"/>
</dbReference>
<dbReference type="HAMAP" id="MF_00236">
    <property type="entry name" value="TatA_E"/>
    <property type="match status" value="1"/>
</dbReference>
<dbReference type="InterPro" id="IPR003369">
    <property type="entry name" value="TatA/B/E"/>
</dbReference>
<dbReference type="InterPro" id="IPR006312">
    <property type="entry name" value="TatA/E"/>
</dbReference>
<dbReference type="NCBIfam" id="NF011430">
    <property type="entry name" value="PRK14861.1"/>
    <property type="match status" value="1"/>
</dbReference>
<dbReference type="NCBIfam" id="TIGR01411">
    <property type="entry name" value="tatAE"/>
    <property type="match status" value="1"/>
</dbReference>
<dbReference type="PANTHER" id="PTHR42982">
    <property type="entry name" value="SEC-INDEPENDENT PROTEIN TRANSLOCASE PROTEIN TATA"/>
    <property type="match status" value="1"/>
</dbReference>
<dbReference type="PANTHER" id="PTHR42982:SF1">
    <property type="entry name" value="SEC-INDEPENDENT PROTEIN TRANSLOCASE PROTEIN TATA"/>
    <property type="match status" value="1"/>
</dbReference>
<dbReference type="Pfam" id="PF02416">
    <property type="entry name" value="TatA_B_E"/>
    <property type="match status" value="1"/>
</dbReference>
<dbReference type="PRINTS" id="PR01506">
    <property type="entry name" value="TATBPROTEIN"/>
</dbReference>
<accession>A6TLZ3</accession>
<feature type="chain" id="PRO_1000058946" description="Sec-independent protein translocase protein TatA">
    <location>
        <begin position="1"/>
        <end position="69"/>
    </location>
</feature>
<feature type="transmembrane region" description="Helical" evidence="1">
    <location>
        <begin position="1"/>
        <end position="21"/>
    </location>
</feature>
<name>TATA_ALKMQ</name>
<evidence type="ECO:0000255" key="1">
    <source>
        <dbReference type="HAMAP-Rule" id="MF_00236"/>
    </source>
</evidence>
<proteinExistence type="inferred from homology"/>
<comment type="function">
    <text evidence="1">Part of the twin-arginine translocation (Tat) system that transports large folded proteins containing a characteristic twin-arginine motif in their signal peptide across membranes. TatA could form the protein-conducting channel of the Tat system.</text>
</comment>
<comment type="subunit">
    <text evidence="1">Forms a complex with TatC.</text>
</comment>
<comment type="subcellular location">
    <subcellularLocation>
        <location evidence="1">Cell membrane</location>
        <topology evidence="1">Single-pass membrane protein</topology>
    </subcellularLocation>
</comment>
<comment type="similarity">
    <text evidence="1">Belongs to the TatA/E family.</text>
</comment>